<dbReference type="EMBL" id="CP000410">
    <property type="protein sequence ID" value="ABJ55423.1"/>
    <property type="molecule type" value="Genomic_DNA"/>
</dbReference>
<dbReference type="RefSeq" id="WP_000106346.1">
    <property type="nucleotide sequence ID" value="NZ_JAMLJR010000008.1"/>
</dbReference>
<dbReference type="SMR" id="Q04JH9"/>
<dbReference type="PaxDb" id="373153-SPD_1399"/>
<dbReference type="GeneID" id="45653193"/>
<dbReference type="KEGG" id="spd:SPD_1399"/>
<dbReference type="eggNOG" id="COG1219">
    <property type="taxonomic scope" value="Bacteria"/>
</dbReference>
<dbReference type="HOGENOM" id="CLU_014218_8_2_9"/>
<dbReference type="BioCyc" id="SPNE373153:G1G6V-1505-MONOMER"/>
<dbReference type="Proteomes" id="UP000001452">
    <property type="component" value="Chromosome"/>
</dbReference>
<dbReference type="GO" id="GO:0009376">
    <property type="term" value="C:HslUV protease complex"/>
    <property type="evidence" value="ECO:0007669"/>
    <property type="project" value="TreeGrafter"/>
</dbReference>
<dbReference type="GO" id="GO:0005524">
    <property type="term" value="F:ATP binding"/>
    <property type="evidence" value="ECO:0007669"/>
    <property type="project" value="UniProtKB-UniRule"/>
</dbReference>
<dbReference type="GO" id="GO:0016887">
    <property type="term" value="F:ATP hydrolysis activity"/>
    <property type="evidence" value="ECO:0007669"/>
    <property type="project" value="InterPro"/>
</dbReference>
<dbReference type="GO" id="GO:0140662">
    <property type="term" value="F:ATP-dependent protein folding chaperone"/>
    <property type="evidence" value="ECO:0007669"/>
    <property type="project" value="InterPro"/>
</dbReference>
<dbReference type="GO" id="GO:0046983">
    <property type="term" value="F:protein dimerization activity"/>
    <property type="evidence" value="ECO:0007669"/>
    <property type="project" value="InterPro"/>
</dbReference>
<dbReference type="GO" id="GO:0051082">
    <property type="term" value="F:unfolded protein binding"/>
    <property type="evidence" value="ECO:0007669"/>
    <property type="project" value="UniProtKB-UniRule"/>
</dbReference>
<dbReference type="GO" id="GO:0008270">
    <property type="term" value="F:zinc ion binding"/>
    <property type="evidence" value="ECO:0007669"/>
    <property type="project" value="InterPro"/>
</dbReference>
<dbReference type="GO" id="GO:0051301">
    <property type="term" value="P:cell division"/>
    <property type="evidence" value="ECO:0007669"/>
    <property type="project" value="TreeGrafter"/>
</dbReference>
<dbReference type="GO" id="GO:0051603">
    <property type="term" value="P:proteolysis involved in protein catabolic process"/>
    <property type="evidence" value="ECO:0007669"/>
    <property type="project" value="TreeGrafter"/>
</dbReference>
<dbReference type="CDD" id="cd19497">
    <property type="entry name" value="RecA-like_ClpX"/>
    <property type="match status" value="1"/>
</dbReference>
<dbReference type="FunFam" id="1.10.8.60:FF:000002">
    <property type="entry name" value="ATP-dependent Clp protease ATP-binding subunit ClpX"/>
    <property type="match status" value="1"/>
</dbReference>
<dbReference type="FunFam" id="3.40.50.300:FF:000005">
    <property type="entry name" value="ATP-dependent Clp protease ATP-binding subunit ClpX"/>
    <property type="match status" value="1"/>
</dbReference>
<dbReference type="Gene3D" id="1.10.8.60">
    <property type="match status" value="1"/>
</dbReference>
<dbReference type="Gene3D" id="6.20.220.10">
    <property type="entry name" value="ClpX chaperone, C4-type zinc finger domain"/>
    <property type="match status" value="1"/>
</dbReference>
<dbReference type="Gene3D" id="3.40.50.300">
    <property type="entry name" value="P-loop containing nucleotide triphosphate hydrolases"/>
    <property type="match status" value="1"/>
</dbReference>
<dbReference type="HAMAP" id="MF_00175">
    <property type="entry name" value="ClpX"/>
    <property type="match status" value="1"/>
</dbReference>
<dbReference type="InterPro" id="IPR003593">
    <property type="entry name" value="AAA+_ATPase"/>
</dbReference>
<dbReference type="InterPro" id="IPR050052">
    <property type="entry name" value="ATP-dep_Clp_protease_ClpX"/>
</dbReference>
<dbReference type="InterPro" id="IPR003959">
    <property type="entry name" value="ATPase_AAA_core"/>
</dbReference>
<dbReference type="InterPro" id="IPR019489">
    <property type="entry name" value="Clp_ATPase_C"/>
</dbReference>
<dbReference type="InterPro" id="IPR004487">
    <property type="entry name" value="Clp_protease_ATP-bd_su_ClpX"/>
</dbReference>
<dbReference type="InterPro" id="IPR046425">
    <property type="entry name" value="ClpX_bact"/>
</dbReference>
<dbReference type="InterPro" id="IPR027417">
    <property type="entry name" value="P-loop_NTPase"/>
</dbReference>
<dbReference type="InterPro" id="IPR010603">
    <property type="entry name" value="Znf_CppX_C4"/>
</dbReference>
<dbReference type="InterPro" id="IPR038366">
    <property type="entry name" value="Znf_CppX_C4_sf"/>
</dbReference>
<dbReference type="NCBIfam" id="TIGR00382">
    <property type="entry name" value="clpX"/>
    <property type="match status" value="1"/>
</dbReference>
<dbReference type="NCBIfam" id="NF003745">
    <property type="entry name" value="PRK05342.1"/>
    <property type="match status" value="1"/>
</dbReference>
<dbReference type="PANTHER" id="PTHR48102:SF7">
    <property type="entry name" value="ATP-DEPENDENT CLP PROTEASE ATP-BINDING SUBUNIT CLPX-LIKE, MITOCHONDRIAL"/>
    <property type="match status" value="1"/>
</dbReference>
<dbReference type="PANTHER" id="PTHR48102">
    <property type="entry name" value="ATP-DEPENDENT CLP PROTEASE ATP-BINDING SUBUNIT CLPX-LIKE, MITOCHONDRIAL-RELATED"/>
    <property type="match status" value="1"/>
</dbReference>
<dbReference type="Pfam" id="PF07724">
    <property type="entry name" value="AAA_2"/>
    <property type="match status" value="1"/>
</dbReference>
<dbReference type="Pfam" id="PF10431">
    <property type="entry name" value="ClpB_D2-small"/>
    <property type="match status" value="1"/>
</dbReference>
<dbReference type="Pfam" id="PF06689">
    <property type="entry name" value="zf-C4_ClpX"/>
    <property type="match status" value="1"/>
</dbReference>
<dbReference type="SMART" id="SM00382">
    <property type="entry name" value="AAA"/>
    <property type="match status" value="1"/>
</dbReference>
<dbReference type="SMART" id="SM01086">
    <property type="entry name" value="ClpB_D2-small"/>
    <property type="match status" value="1"/>
</dbReference>
<dbReference type="SMART" id="SM00994">
    <property type="entry name" value="zf-C4_ClpX"/>
    <property type="match status" value="1"/>
</dbReference>
<dbReference type="SUPFAM" id="SSF57716">
    <property type="entry name" value="Glucocorticoid receptor-like (DNA-binding domain)"/>
    <property type="match status" value="1"/>
</dbReference>
<dbReference type="SUPFAM" id="SSF52540">
    <property type="entry name" value="P-loop containing nucleoside triphosphate hydrolases"/>
    <property type="match status" value="1"/>
</dbReference>
<dbReference type="PROSITE" id="PS51902">
    <property type="entry name" value="CLPX_ZB"/>
    <property type="match status" value="1"/>
</dbReference>
<keyword id="KW-0067">ATP-binding</keyword>
<keyword id="KW-0143">Chaperone</keyword>
<keyword id="KW-0479">Metal-binding</keyword>
<keyword id="KW-0547">Nucleotide-binding</keyword>
<keyword id="KW-1185">Reference proteome</keyword>
<keyword id="KW-0862">Zinc</keyword>
<evidence type="ECO:0000255" key="1">
    <source>
        <dbReference type="HAMAP-Rule" id="MF_00175"/>
    </source>
</evidence>
<evidence type="ECO:0000255" key="2">
    <source>
        <dbReference type="PROSITE-ProRule" id="PRU01250"/>
    </source>
</evidence>
<gene>
    <name evidence="1" type="primary">clpX</name>
    <name type="ordered locus">SPD_1399</name>
</gene>
<accession>Q04JH9</accession>
<reference key="1">
    <citation type="journal article" date="2007" name="J. Bacteriol.">
        <title>Genome sequence of Avery's virulent serotype 2 strain D39 of Streptococcus pneumoniae and comparison with that of unencapsulated laboratory strain R6.</title>
        <authorList>
            <person name="Lanie J.A."/>
            <person name="Ng W.-L."/>
            <person name="Kazmierczak K.M."/>
            <person name="Andrzejewski T.M."/>
            <person name="Davidsen T.M."/>
            <person name="Wayne K.J."/>
            <person name="Tettelin H."/>
            <person name="Glass J.I."/>
            <person name="Winkler M.E."/>
        </authorList>
    </citation>
    <scope>NUCLEOTIDE SEQUENCE [LARGE SCALE GENOMIC DNA]</scope>
    <source>
        <strain>D39 / NCTC 7466</strain>
    </source>
</reference>
<protein>
    <recommendedName>
        <fullName evidence="1">ATP-dependent Clp protease ATP-binding subunit ClpX</fullName>
    </recommendedName>
</protein>
<name>CLPX_STRP2</name>
<sequence length="410" mass="45798">MSTNRKNDMMVYCSFCGKNQEEVQKIIAGNNAFICNECVELAQEIIREELVEEVLADLSEVPKPIELLHILNHYVIGQDRAKRALAVAVYNHYKRINFHDTREESEDVDLQKSNILMIGPTGSGKTFLAQTLAKSLNVPFAIADATALTEAGYVGEDVENILLKLLQVADFNIERAERGIIYVDEIDKIAKKSENVSITRDVSGEGVQQALLKIIEGTVASVPPQGGRKHPQQEMIQVDTKNILFIVGGAFDGIEEIVKQRLGEKVIGFGQNNKAIDENSSYMQEIIAEDIQKFGIIPELIGRLPVFAALEQLTVDDLVRILKEPRNALVKQYQTLLSYDDVELEFDDEALQEIANKAIERKTGARGLRSIIEETMLDVMFEVPSQENVKLVRITKETVDGTDKPILETA</sequence>
<organism>
    <name type="scientific">Streptococcus pneumoniae serotype 2 (strain D39 / NCTC 7466)</name>
    <dbReference type="NCBI Taxonomy" id="373153"/>
    <lineage>
        <taxon>Bacteria</taxon>
        <taxon>Bacillati</taxon>
        <taxon>Bacillota</taxon>
        <taxon>Bacilli</taxon>
        <taxon>Lactobacillales</taxon>
        <taxon>Streptococcaceae</taxon>
        <taxon>Streptococcus</taxon>
    </lineage>
</organism>
<proteinExistence type="inferred from homology"/>
<comment type="function">
    <text evidence="1">ATP-dependent specificity component of the Clp protease. It directs the protease to specific substrates. Can perform chaperone functions in the absence of ClpP.</text>
</comment>
<comment type="subunit">
    <text evidence="1">Component of the ClpX-ClpP complex. Forms a hexameric ring that, in the presence of ATP, binds to fourteen ClpP subunits assembled into a disk-like structure with a central cavity, resembling the structure of eukaryotic proteasomes.</text>
</comment>
<comment type="similarity">
    <text evidence="1">Belongs to the ClpX chaperone family.</text>
</comment>
<feature type="chain" id="PRO_1000024677" description="ATP-dependent Clp protease ATP-binding subunit ClpX">
    <location>
        <begin position="1"/>
        <end position="410"/>
    </location>
</feature>
<feature type="domain" description="ClpX-type ZB" evidence="2">
    <location>
        <begin position="1"/>
        <end position="54"/>
    </location>
</feature>
<feature type="binding site" evidence="2">
    <location>
        <position position="13"/>
    </location>
    <ligand>
        <name>Zn(2+)</name>
        <dbReference type="ChEBI" id="CHEBI:29105"/>
    </ligand>
</feature>
<feature type="binding site" evidence="2">
    <location>
        <position position="16"/>
    </location>
    <ligand>
        <name>Zn(2+)</name>
        <dbReference type="ChEBI" id="CHEBI:29105"/>
    </ligand>
</feature>
<feature type="binding site" evidence="2">
    <location>
        <position position="35"/>
    </location>
    <ligand>
        <name>Zn(2+)</name>
        <dbReference type="ChEBI" id="CHEBI:29105"/>
    </ligand>
</feature>
<feature type="binding site" evidence="2">
    <location>
        <position position="38"/>
    </location>
    <ligand>
        <name>Zn(2+)</name>
        <dbReference type="ChEBI" id="CHEBI:29105"/>
    </ligand>
</feature>
<feature type="binding site" evidence="1">
    <location>
        <begin position="120"/>
        <end position="127"/>
    </location>
    <ligand>
        <name>ATP</name>
        <dbReference type="ChEBI" id="CHEBI:30616"/>
    </ligand>
</feature>